<gene>
    <name evidence="1" type="primary">mutL</name>
    <name type="ordered locus">GSU2001</name>
</gene>
<dbReference type="EMBL" id="AE017180">
    <property type="protein sequence ID" value="AAR35377.1"/>
    <property type="molecule type" value="Genomic_DNA"/>
</dbReference>
<dbReference type="RefSeq" id="NP_953050.1">
    <property type="nucleotide sequence ID" value="NC_002939.5"/>
</dbReference>
<dbReference type="RefSeq" id="WP_010942644.1">
    <property type="nucleotide sequence ID" value="NC_002939.5"/>
</dbReference>
<dbReference type="SMR" id="Q74BP0"/>
<dbReference type="FunCoup" id="Q74BP0">
    <property type="interactions" value="271"/>
</dbReference>
<dbReference type="STRING" id="243231.GSU2001"/>
<dbReference type="EnsemblBacteria" id="AAR35377">
    <property type="protein sequence ID" value="AAR35377"/>
    <property type="gene ID" value="GSU2001"/>
</dbReference>
<dbReference type="KEGG" id="gsu:GSU2001"/>
<dbReference type="PATRIC" id="fig|243231.5.peg.2037"/>
<dbReference type="eggNOG" id="COG0323">
    <property type="taxonomic scope" value="Bacteria"/>
</dbReference>
<dbReference type="HOGENOM" id="CLU_004131_4_2_7"/>
<dbReference type="InParanoid" id="Q74BP0"/>
<dbReference type="OrthoDB" id="9763467at2"/>
<dbReference type="Proteomes" id="UP000000577">
    <property type="component" value="Chromosome"/>
</dbReference>
<dbReference type="GO" id="GO:0032300">
    <property type="term" value="C:mismatch repair complex"/>
    <property type="evidence" value="ECO:0000318"/>
    <property type="project" value="GO_Central"/>
</dbReference>
<dbReference type="GO" id="GO:0005524">
    <property type="term" value="F:ATP binding"/>
    <property type="evidence" value="ECO:0007669"/>
    <property type="project" value="InterPro"/>
</dbReference>
<dbReference type="GO" id="GO:0016887">
    <property type="term" value="F:ATP hydrolysis activity"/>
    <property type="evidence" value="ECO:0000318"/>
    <property type="project" value="GO_Central"/>
</dbReference>
<dbReference type="GO" id="GO:0140664">
    <property type="term" value="F:ATP-dependent DNA damage sensor activity"/>
    <property type="evidence" value="ECO:0007669"/>
    <property type="project" value="InterPro"/>
</dbReference>
<dbReference type="GO" id="GO:0030983">
    <property type="term" value="F:mismatched DNA binding"/>
    <property type="evidence" value="ECO:0007669"/>
    <property type="project" value="InterPro"/>
</dbReference>
<dbReference type="GO" id="GO:0006298">
    <property type="term" value="P:mismatch repair"/>
    <property type="evidence" value="ECO:0000318"/>
    <property type="project" value="GO_Central"/>
</dbReference>
<dbReference type="CDD" id="cd16926">
    <property type="entry name" value="HATPase_MutL-MLH-PMS-like"/>
    <property type="match status" value="1"/>
</dbReference>
<dbReference type="CDD" id="cd00782">
    <property type="entry name" value="MutL_Trans"/>
    <property type="match status" value="1"/>
</dbReference>
<dbReference type="FunFam" id="3.30.565.10:FF:000003">
    <property type="entry name" value="DNA mismatch repair endonuclease MutL"/>
    <property type="match status" value="1"/>
</dbReference>
<dbReference type="Gene3D" id="3.30.230.10">
    <property type="match status" value="1"/>
</dbReference>
<dbReference type="Gene3D" id="3.30.565.10">
    <property type="entry name" value="Histidine kinase-like ATPase, C-terminal domain"/>
    <property type="match status" value="1"/>
</dbReference>
<dbReference type="Gene3D" id="3.30.1540.20">
    <property type="entry name" value="MutL, C-terminal domain, dimerisation subdomain"/>
    <property type="match status" value="1"/>
</dbReference>
<dbReference type="Gene3D" id="3.30.1370.100">
    <property type="entry name" value="MutL, C-terminal domain, regulatory subdomain"/>
    <property type="match status" value="1"/>
</dbReference>
<dbReference type="HAMAP" id="MF_00149">
    <property type="entry name" value="DNA_mis_repair"/>
    <property type="match status" value="1"/>
</dbReference>
<dbReference type="InterPro" id="IPR014762">
    <property type="entry name" value="DNA_mismatch_repair_CS"/>
</dbReference>
<dbReference type="InterPro" id="IPR020667">
    <property type="entry name" value="DNA_mismatch_repair_MutL"/>
</dbReference>
<dbReference type="InterPro" id="IPR013507">
    <property type="entry name" value="DNA_mismatch_S5_2-like"/>
</dbReference>
<dbReference type="InterPro" id="IPR036890">
    <property type="entry name" value="HATPase_C_sf"/>
</dbReference>
<dbReference type="InterPro" id="IPR002099">
    <property type="entry name" value="MutL/Mlh/PMS"/>
</dbReference>
<dbReference type="InterPro" id="IPR038973">
    <property type="entry name" value="MutL/Mlh/Pms-like"/>
</dbReference>
<dbReference type="InterPro" id="IPR014790">
    <property type="entry name" value="MutL_C"/>
</dbReference>
<dbReference type="InterPro" id="IPR042120">
    <property type="entry name" value="MutL_C_dimsub"/>
</dbReference>
<dbReference type="InterPro" id="IPR042121">
    <property type="entry name" value="MutL_C_regsub"/>
</dbReference>
<dbReference type="InterPro" id="IPR037198">
    <property type="entry name" value="MutL_C_sf"/>
</dbReference>
<dbReference type="InterPro" id="IPR020568">
    <property type="entry name" value="Ribosomal_Su5_D2-typ_SF"/>
</dbReference>
<dbReference type="InterPro" id="IPR014721">
    <property type="entry name" value="Ribsml_uS5_D2-typ_fold_subgr"/>
</dbReference>
<dbReference type="NCBIfam" id="TIGR00585">
    <property type="entry name" value="mutl"/>
    <property type="match status" value="1"/>
</dbReference>
<dbReference type="PANTHER" id="PTHR10073">
    <property type="entry name" value="DNA MISMATCH REPAIR PROTEIN MLH, PMS, MUTL"/>
    <property type="match status" value="1"/>
</dbReference>
<dbReference type="PANTHER" id="PTHR10073:SF12">
    <property type="entry name" value="DNA MISMATCH REPAIR PROTEIN MLH1"/>
    <property type="match status" value="1"/>
</dbReference>
<dbReference type="Pfam" id="PF01119">
    <property type="entry name" value="DNA_mis_repair"/>
    <property type="match status" value="1"/>
</dbReference>
<dbReference type="Pfam" id="PF13589">
    <property type="entry name" value="HATPase_c_3"/>
    <property type="match status" value="1"/>
</dbReference>
<dbReference type="Pfam" id="PF08676">
    <property type="entry name" value="MutL_C"/>
    <property type="match status" value="1"/>
</dbReference>
<dbReference type="SMART" id="SM01340">
    <property type="entry name" value="DNA_mis_repair"/>
    <property type="match status" value="1"/>
</dbReference>
<dbReference type="SMART" id="SM00853">
    <property type="entry name" value="MutL_C"/>
    <property type="match status" value="1"/>
</dbReference>
<dbReference type="SUPFAM" id="SSF55874">
    <property type="entry name" value="ATPase domain of HSP90 chaperone/DNA topoisomerase II/histidine kinase"/>
    <property type="match status" value="1"/>
</dbReference>
<dbReference type="SUPFAM" id="SSF118116">
    <property type="entry name" value="DNA mismatch repair protein MutL"/>
    <property type="match status" value="1"/>
</dbReference>
<dbReference type="SUPFAM" id="SSF54211">
    <property type="entry name" value="Ribosomal protein S5 domain 2-like"/>
    <property type="match status" value="1"/>
</dbReference>
<dbReference type="PROSITE" id="PS00058">
    <property type="entry name" value="DNA_MISMATCH_REPAIR_1"/>
    <property type="match status" value="1"/>
</dbReference>
<sequence length="606" mass="66598">MPHRIRILPEILTNKIAAGEVVERPASVVKELVENALDAGCGEIIVEIEGGGRRLIRITDDGCGMSREDALMALERHATSKIATDDDLFSLATLGFRGEALPSVASVSRFTLATRERGSIEGTEIYAEGGKIREVKACGMAEGTVVSVRNLFFNTPARLKFMKSVETEGGHVADLVTRLALSRPEVRFTCVSDGKTLFRALDGTLLDRVAALLGKTVASALHPVDLATEGVRVTGLVARPDVSRSAASHLYTYINGRFIRDRVVQHAILQAYRNFLERGRYPVVVLFIEVSPGEVDVNVHPTKHEVRFRQQGIVHDVIQGAVEETLRLTPWIRRSESPVAAPLAVPRPQQYVQGTGARQVEEVRELLENYRPAVAPHRPLFAPQPAPQPDREPPLPDSGSRMLDDTAVRRHGGYFSSLAVIGQYNASYILCQDGSDLVIIDQHAAHERVAFERLKTQFAAGRVEGQGLLFPETVELSHRESAVVREHGGELGRLGFDLEDFGGTTWIVKGIPRLLAGTDYLRLLRDTLEELQSLGASRSIADAVEDILTRVACHSVVRGEHPLTTGEIEALFAHMDATDFSTNCPHGRPVLQRLTLGEVEKMFKRV</sequence>
<keyword id="KW-0227">DNA damage</keyword>
<keyword id="KW-0234">DNA repair</keyword>
<keyword id="KW-1185">Reference proteome</keyword>
<proteinExistence type="inferred from homology"/>
<reference key="1">
    <citation type="journal article" date="2003" name="Science">
        <title>Genome of Geobacter sulfurreducens: metal reduction in subsurface environments.</title>
        <authorList>
            <person name="Methe B.A."/>
            <person name="Nelson K.E."/>
            <person name="Eisen J.A."/>
            <person name="Paulsen I.T."/>
            <person name="Nelson W.C."/>
            <person name="Heidelberg J.F."/>
            <person name="Wu D."/>
            <person name="Wu M."/>
            <person name="Ward N.L."/>
            <person name="Beanan M.J."/>
            <person name="Dodson R.J."/>
            <person name="Madupu R."/>
            <person name="Brinkac L.M."/>
            <person name="Daugherty S.C."/>
            <person name="DeBoy R.T."/>
            <person name="Durkin A.S."/>
            <person name="Gwinn M.L."/>
            <person name="Kolonay J.F."/>
            <person name="Sullivan S.A."/>
            <person name="Haft D.H."/>
            <person name="Selengut J."/>
            <person name="Davidsen T.M."/>
            <person name="Zafar N."/>
            <person name="White O."/>
            <person name="Tran B."/>
            <person name="Romero C."/>
            <person name="Forberger H.A."/>
            <person name="Weidman J.F."/>
            <person name="Khouri H.M."/>
            <person name="Feldblyum T.V."/>
            <person name="Utterback T.R."/>
            <person name="Van Aken S.E."/>
            <person name="Lovley D.R."/>
            <person name="Fraser C.M."/>
        </authorList>
    </citation>
    <scope>NUCLEOTIDE SEQUENCE [LARGE SCALE GENOMIC DNA]</scope>
    <source>
        <strain>ATCC 51573 / DSM 12127 / PCA</strain>
    </source>
</reference>
<organism>
    <name type="scientific">Geobacter sulfurreducens (strain ATCC 51573 / DSM 12127 / PCA)</name>
    <dbReference type="NCBI Taxonomy" id="243231"/>
    <lineage>
        <taxon>Bacteria</taxon>
        <taxon>Pseudomonadati</taxon>
        <taxon>Thermodesulfobacteriota</taxon>
        <taxon>Desulfuromonadia</taxon>
        <taxon>Geobacterales</taxon>
        <taxon>Geobacteraceae</taxon>
        <taxon>Geobacter</taxon>
    </lineage>
</organism>
<feature type="chain" id="PRO_1000010018" description="DNA mismatch repair protein MutL">
    <location>
        <begin position="1"/>
        <end position="606"/>
    </location>
</feature>
<feature type="region of interest" description="Disordered" evidence="2">
    <location>
        <begin position="377"/>
        <end position="401"/>
    </location>
</feature>
<name>MUTL_GEOSL</name>
<protein>
    <recommendedName>
        <fullName evidence="1">DNA mismatch repair protein MutL</fullName>
    </recommendedName>
</protein>
<accession>Q74BP0</accession>
<comment type="function">
    <text evidence="1">This protein is involved in the repair of mismatches in DNA. It is required for dam-dependent methyl-directed DNA mismatch repair. May act as a 'molecular matchmaker', a protein that promotes the formation of a stable complex between two or more DNA-binding proteins in an ATP-dependent manner without itself being part of a final effector complex.</text>
</comment>
<comment type="similarity">
    <text evidence="1">Belongs to the DNA mismatch repair MutL/HexB family.</text>
</comment>
<evidence type="ECO:0000255" key="1">
    <source>
        <dbReference type="HAMAP-Rule" id="MF_00149"/>
    </source>
</evidence>
<evidence type="ECO:0000256" key="2">
    <source>
        <dbReference type="SAM" id="MobiDB-lite"/>
    </source>
</evidence>